<reference key="1">
    <citation type="journal article" date="2008" name="Genome Res.">
        <title>Genome sequence of the beta-rhizobium Cupriavidus taiwanensis and comparative genomics of rhizobia.</title>
        <authorList>
            <person name="Amadou C."/>
            <person name="Pascal G."/>
            <person name="Mangenot S."/>
            <person name="Glew M."/>
            <person name="Bontemps C."/>
            <person name="Capela D."/>
            <person name="Carrere S."/>
            <person name="Cruveiller S."/>
            <person name="Dossat C."/>
            <person name="Lajus A."/>
            <person name="Marchetti M."/>
            <person name="Poinsot V."/>
            <person name="Rouy Z."/>
            <person name="Servin B."/>
            <person name="Saad M."/>
            <person name="Schenowitz C."/>
            <person name="Barbe V."/>
            <person name="Batut J."/>
            <person name="Medigue C."/>
            <person name="Masson-Boivin C."/>
        </authorList>
    </citation>
    <scope>NUCLEOTIDE SEQUENCE [LARGE SCALE GENOMIC DNA]</scope>
    <source>
        <strain>DSM 17343 / BCRC 17206 / CCUG 44338 / CIP 107171 / LMG 19424 / R1</strain>
    </source>
</reference>
<organism>
    <name type="scientific">Cupriavidus taiwanensis (strain DSM 17343 / BCRC 17206 / CCUG 44338 / CIP 107171 / LMG 19424 / R1)</name>
    <name type="common">Ralstonia taiwanensis (strain LMG 19424)</name>
    <dbReference type="NCBI Taxonomy" id="977880"/>
    <lineage>
        <taxon>Bacteria</taxon>
        <taxon>Pseudomonadati</taxon>
        <taxon>Pseudomonadota</taxon>
        <taxon>Betaproteobacteria</taxon>
        <taxon>Burkholderiales</taxon>
        <taxon>Burkholderiaceae</taxon>
        <taxon>Cupriavidus</taxon>
    </lineage>
</organism>
<gene>
    <name evidence="1" type="primary">rpmD</name>
    <name type="ordered locus">RALTA_A2925</name>
</gene>
<protein>
    <recommendedName>
        <fullName evidence="1">Large ribosomal subunit protein uL30</fullName>
    </recommendedName>
    <alternativeName>
        <fullName evidence="2">50S ribosomal protein L30</fullName>
    </alternativeName>
</protein>
<name>RL30_CUPTR</name>
<proteinExistence type="inferred from homology"/>
<evidence type="ECO:0000255" key="1">
    <source>
        <dbReference type="HAMAP-Rule" id="MF_01371"/>
    </source>
</evidence>
<evidence type="ECO:0000305" key="2"/>
<dbReference type="EMBL" id="CU633749">
    <property type="protein sequence ID" value="CAQ70850.1"/>
    <property type="molecule type" value="Genomic_DNA"/>
</dbReference>
<dbReference type="RefSeq" id="WP_010812381.1">
    <property type="nucleotide sequence ID" value="NC_010528.1"/>
</dbReference>
<dbReference type="SMR" id="B3R7F0"/>
<dbReference type="GeneID" id="98344084"/>
<dbReference type="KEGG" id="cti:RALTA_A2925"/>
<dbReference type="eggNOG" id="COG1841">
    <property type="taxonomic scope" value="Bacteria"/>
</dbReference>
<dbReference type="HOGENOM" id="CLU_131047_1_4_4"/>
<dbReference type="BioCyc" id="CTAI977880:RALTA_RS14265-MONOMER"/>
<dbReference type="Proteomes" id="UP000001692">
    <property type="component" value="Chromosome 1"/>
</dbReference>
<dbReference type="GO" id="GO:0022625">
    <property type="term" value="C:cytosolic large ribosomal subunit"/>
    <property type="evidence" value="ECO:0007669"/>
    <property type="project" value="TreeGrafter"/>
</dbReference>
<dbReference type="GO" id="GO:0003735">
    <property type="term" value="F:structural constituent of ribosome"/>
    <property type="evidence" value="ECO:0007669"/>
    <property type="project" value="InterPro"/>
</dbReference>
<dbReference type="GO" id="GO:0006412">
    <property type="term" value="P:translation"/>
    <property type="evidence" value="ECO:0007669"/>
    <property type="project" value="UniProtKB-UniRule"/>
</dbReference>
<dbReference type="CDD" id="cd01658">
    <property type="entry name" value="Ribosomal_L30"/>
    <property type="match status" value="1"/>
</dbReference>
<dbReference type="FunFam" id="3.30.1390.20:FF:000001">
    <property type="entry name" value="50S ribosomal protein L30"/>
    <property type="match status" value="1"/>
</dbReference>
<dbReference type="Gene3D" id="3.30.1390.20">
    <property type="entry name" value="Ribosomal protein L30, ferredoxin-like fold domain"/>
    <property type="match status" value="1"/>
</dbReference>
<dbReference type="HAMAP" id="MF_01371_B">
    <property type="entry name" value="Ribosomal_uL30_B"/>
    <property type="match status" value="1"/>
</dbReference>
<dbReference type="InterPro" id="IPR036919">
    <property type="entry name" value="Ribo_uL30_ferredoxin-like_sf"/>
</dbReference>
<dbReference type="InterPro" id="IPR005996">
    <property type="entry name" value="Ribosomal_uL30_bac-type"/>
</dbReference>
<dbReference type="InterPro" id="IPR016082">
    <property type="entry name" value="Ribosomal_uL30_ferredoxin-like"/>
</dbReference>
<dbReference type="NCBIfam" id="TIGR01308">
    <property type="entry name" value="rpmD_bact"/>
    <property type="match status" value="1"/>
</dbReference>
<dbReference type="PANTHER" id="PTHR15892:SF2">
    <property type="entry name" value="LARGE RIBOSOMAL SUBUNIT PROTEIN UL30M"/>
    <property type="match status" value="1"/>
</dbReference>
<dbReference type="PANTHER" id="PTHR15892">
    <property type="entry name" value="MITOCHONDRIAL RIBOSOMAL PROTEIN L30"/>
    <property type="match status" value="1"/>
</dbReference>
<dbReference type="Pfam" id="PF00327">
    <property type="entry name" value="Ribosomal_L30"/>
    <property type="match status" value="1"/>
</dbReference>
<dbReference type="PIRSF" id="PIRSF002211">
    <property type="entry name" value="Ribosomal_L30_bac-type"/>
    <property type="match status" value="1"/>
</dbReference>
<dbReference type="SUPFAM" id="SSF55129">
    <property type="entry name" value="Ribosomal protein L30p/L7e"/>
    <property type="match status" value="1"/>
</dbReference>
<comment type="subunit">
    <text evidence="1">Part of the 50S ribosomal subunit.</text>
</comment>
<comment type="similarity">
    <text evidence="1">Belongs to the universal ribosomal protein uL30 family.</text>
</comment>
<feature type="chain" id="PRO_1000144671" description="Large ribosomal subunit protein uL30">
    <location>
        <begin position="1"/>
        <end position="60"/>
    </location>
</feature>
<keyword id="KW-0687">Ribonucleoprotein</keyword>
<keyword id="KW-0689">Ribosomal protein</keyword>
<sequence length="60" mass="6690">MSQKTVKVQLVRSLIGTREDHRATVRGLGLRRINSVSELQDTPAVRGMINKVSYLVKVLA</sequence>
<accession>B3R7F0</accession>